<proteinExistence type="inferred from homology"/>
<protein>
    <recommendedName>
        <fullName evidence="1">Protein E6</fullName>
    </recommendedName>
</protein>
<keyword id="KW-0010">Activator</keyword>
<keyword id="KW-0238">DNA-binding</keyword>
<keyword id="KW-0244">Early protein</keyword>
<keyword id="KW-1035">Host cytoplasm</keyword>
<keyword id="KW-1048">Host nucleus</keyword>
<keyword id="KW-0945">Host-virus interaction</keyword>
<keyword id="KW-1090">Inhibition of host innate immune response by virus</keyword>
<keyword id="KW-0479">Metal-binding</keyword>
<keyword id="KW-1119">Modulation of host cell apoptosis by virus</keyword>
<keyword id="KW-1185">Reference proteome</keyword>
<keyword id="KW-0804">Transcription</keyword>
<keyword id="KW-0805">Transcription regulation</keyword>
<keyword id="KW-0899">Viral immunoevasion</keyword>
<keyword id="KW-0862">Zinc</keyword>
<keyword id="KW-0863">Zinc-finger</keyword>
<comment type="function">
    <text evidence="1">Plays a major role in the induction and maintenance of cellular transformation. E6 associates with host UBE3A/E6-AP ubiquitin-protein ligase and modulates its activity. Protects host keratinocytes from apoptosis by mediating the degradation of host BAK1. May also inhibit host immune response.</text>
</comment>
<comment type="subunit">
    <text evidence="1">Forms homodimers. Interacts with ubiquitin-protein ligase UBE3A/E6-AP; this interaction stimulates UBE3A ubiquitin activity. Interacts with host BAK1.</text>
</comment>
<comment type="subcellular location">
    <subcellularLocation>
        <location evidence="1">Host cytoplasm</location>
    </subcellularLocation>
    <subcellularLocation>
        <location evidence="1">Host nucleus</location>
    </subcellularLocation>
</comment>
<comment type="similarity">
    <text evidence="1 2">Belongs to the papillomaviridae E6 protein family.</text>
</comment>
<comment type="caution">
    <text evidence="2">It is uncertain whether Met-1 or Met-8 is the initiator.</text>
</comment>
<comment type="sequence caution" evidence="2">
    <conflict type="erroneous initiation">
        <sequence resource="EMBL-CDS" id="CAA52483"/>
    </conflict>
</comment>
<feature type="chain" id="PRO_0000133329" description="Protein E6">
    <location>
        <begin position="1"/>
        <end position="148"/>
    </location>
</feature>
<feature type="zinc finger region" evidence="1">
    <location>
        <begin position="34"/>
        <end position="71"/>
    </location>
</feature>
<feature type="zinc finger region" evidence="1">
    <location>
        <begin position="108"/>
        <end position="144"/>
    </location>
</feature>
<name>VE6_HPV09</name>
<evidence type="ECO:0000255" key="1">
    <source>
        <dbReference type="HAMAP-Rule" id="MF_04006"/>
    </source>
</evidence>
<evidence type="ECO:0000305" key="2"/>
<organism>
    <name type="scientific">Human papillomavirus 9</name>
    <dbReference type="NCBI Taxonomy" id="10621"/>
    <lineage>
        <taxon>Viruses</taxon>
        <taxon>Monodnaviria</taxon>
        <taxon>Shotokuvirae</taxon>
        <taxon>Cossaviricota</taxon>
        <taxon>Papovaviricetes</taxon>
        <taxon>Zurhausenvirales</taxon>
        <taxon>Papillomaviridae</taxon>
        <taxon>Firstpapillomavirinae</taxon>
        <taxon>Betapapillomavirus</taxon>
        <taxon>Betapapillomavirus 2</taxon>
    </lineage>
</organism>
<reference key="1">
    <citation type="journal article" date="1994" name="Curr. Top. Microbiol. Immunol.">
        <title>Primer-directed sequencing of human papillomavirus types.</title>
        <authorList>
            <person name="Delius H."/>
            <person name="Hofmann B."/>
        </authorList>
    </citation>
    <scope>NUCLEOTIDE SEQUENCE [GENOMIC DNA]</scope>
</reference>
<gene>
    <name evidence="1" type="primary">E6</name>
</gene>
<organismHost>
    <name type="scientific">Homo sapiens</name>
    <name type="common">Human</name>
    <dbReference type="NCBI Taxonomy" id="9606"/>
</organismHost>
<sequence>MYLTEQIMDRPKPRTVKELADTLVIPLIDLLIPCKFCNRFLSYFELLNFDHKCLQLIWTEEDLVYGLCSSCAYASAQLEFTHFFQFAVVGKDIETVEGTAIGNICIRCRYCFKLLDLVEKLATCYKFEQFYKVRNSWKGLCRHCGSVE</sequence>
<accession>P36801</accession>
<accession>Q81988</accession>
<dbReference type="EMBL" id="X74464">
    <property type="protein sequence ID" value="CAA52482.1"/>
    <property type="molecule type" value="Genomic_DNA"/>
</dbReference>
<dbReference type="EMBL" id="X74464">
    <property type="protein sequence ID" value="CAA52483.1"/>
    <property type="status" value="ALT_INIT"/>
    <property type="molecule type" value="Genomic_DNA"/>
</dbReference>
<dbReference type="PIR" id="S36590">
    <property type="entry name" value="S36590"/>
</dbReference>
<dbReference type="RefSeq" id="NP_041860.1">
    <property type="nucleotide sequence ID" value="NC_001596.1"/>
</dbReference>
<dbReference type="RefSeq" id="NP_041861.1">
    <property type="nucleotide sequence ID" value="NC_001596.1"/>
</dbReference>
<dbReference type="SMR" id="P36801"/>
<dbReference type="BioGRID" id="3509187">
    <property type="interactions" value="35"/>
</dbReference>
<dbReference type="IntAct" id="P36801">
    <property type="interactions" value="30"/>
</dbReference>
<dbReference type="MINT" id="P36801"/>
<dbReference type="DNASU" id="1489480"/>
<dbReference type="GeneID" id="1489480"/>
<dbReference type="KEGG" id="vg:1489480"/>
<dbReference type="OrthoDB" id="27353at10239"/>
<dbReference type="Proteomes" id="UP000009104">
    <property type="component" value="Genome"/>
</dbReference>
<dbReference type="GO" id="GO:0030430">
    <property type="term" value="C:host cell cytoplasm"/>
    <property type="evidence" value="ECO:0007669"/>
    <property type="project" value="UniProtKB-SubCell"/>
</dbReference>
<dbReference type="GO" id="GO:0042025">
    <property type="term" value="C:host cell nucleus"/>
    <property type="evidence" value="ECO:0007669"/>
    <property type="project" value="UniProtKB-SubCell"/>
</dbReference>
<dbReference type="GO" id="GO:0003677">
    <property type="term" value="F:DNA binding"/>
    <property type="evidence" value="ECO:0007669"/>
    <property type="project" value="UniProtKB-UniRule"/>
</dbReference>
<dbReference type="GO" id="GO:0008270">
    <property type="term" value="F:zinc ion binding"/>
    <property type="evidence" value="ECO:0007669"/>
    <property type="project" value="UniProtKB-KW"/>
</dbReference>
<dbReference type="GO" id="GO:0006351">
    <property type="term" value="P:DNA-templated transcription"/>
    <property type="evidence" value="ECO:0007669"/>
    <property type="project" value="UniProtKB-UniRule"/>
</dbReference>
<dbReference type="GO" id="GO:0006355">
    <property type="term" value="P:regulation of DNA-templated transcription"/>
    <property type="evidence" value="ECO:0007669"/>
    <property type="project" value="UniProtKB-UniRule"/>
</dbReference>
<dbReference type="GO" id="GO:0052150">
    <property type="term" value="P:symbiont-mediated perturbation of host apoptosis"/>
    <property type="evidence" value="ECO:0007669"/>
    <property type="project" value="UniProtKB-KW"/>
</dbReference>
<dbReference type="GO" id="GO:0039648">
    <property type="term" value="P:symbiont-mediated perturbation of host ubiquitin-like protein modification"/>
    <property type="evidence" value="ECO:0007669"/>
    <property type="project" value="UniProtKB-UniRule"/>
</dbReference>
<dbReference type="GO" id="GO:0052170">
    <property type="term" value="P:symbiont-mediated suppression of host innate immune response"/>
    <property type="evidence" value="ECO:0007669"/>
    <property type="project" value="UniProtKB-KW"/>
</dbReference>
<dbReference type="GO" id="GO:0039502">
    <property type="term" value="P:symbiont-mediated suppression of host type I interferon-mediated signaling pathway"/>
    <property type="evidence" value="ECO:0007669"/>
    <property type="project" value="UniProtKB-UniRule"/>
</dbReference>
<dbReference type="Gene3D" id="3.30.240.40">
    <property type="entry name" value="E6 early regulatory protein"/>
    <property type="match status" value="2"/>
</dbReference>
<dbReference type="HAMAP" id="MF_04006">
    <property type="entry name" value="HPV_E6"/>
    <property type="match status" value="1"/>
</dbReference>
<dbReference type="InterPro" id="IPR001334">
    <property type="entry name" value="E6"/>
</dbReference>
<dbReference type="InterPro" id="IPR038575">
    <property type="entry name" value="E6_sf"/>
</dbReference>
<dbReference type="Pfam" id="PF00518">
    <property type="entry name" value="E6"/>
    <property type="match status" value="1"/>
</dbReference>
<dbReference type="SUPFAM" id="SSF161229">
    <property type="entry name" value="E6 C-terminal domain-like"/>
    <property type="match status" value="2"/>
</dbReference>